<sequence length="1373" mass="154279">MVSLRDNIEAQPLSHNRRIRKNFGHINLVADIPNLIEIQKNSYEKNFLQLNIKDSERKNKGLQSILNSIFPISDSSNIANLEFVKYEFDTPKYDVEECSQRSLSYAAPLKVTLRLSIWDIDEDTGTREIKGIKEQEVYMGDIPLMTKNGTFIINGTERVVVSQMHRSPGVFFYHDEGKVHSSGKLLYSARVIPYRGSWLDLEFDAKDVIYFRIDRKRKLYITTLLRAIGMSTEEIIKFYYNSVTYKLVKNKGWAVKFIPQHITAHRLTSDLVDADTGNILLKAGQKITPRLAKKYFGEGLNNILVAHETLIGKYLSEDLRDPTSDEVLAKIGEMITADMLNVINALKIKNVNVLVINPQSGPYIRNTLFADKNQDREAALCDIFRVLRPGEPANIEAAESLFYNLFFDVDRYDLSEVGRIKMNSRLELNISEEVTVLTIDDIKNIVRVLVELKDGKGIIDDIDHLGNRRVRSVGELIENQFRIGLVRMEKSVIERMSAGDVDTVMPHDLVNSKILVSVVKEFFNTSQLSQFMDQTNPLSEITHKRRLSALGPGGLSRDRAGFEVRDVHPTHYGRICPIETPEGQNIGLINSMATYARINKHGFIESPYRRVKDGCVTDEVVYLSAIEEGKYKIGQANSKVNKDGKLQGEFINCRVEGGNFVMVEPYEVDFIDVTPMQVVSVAASLIPFLENDDANRALMGSNMQRQAVPLIKTDAPFVGTGVEGVVAKDSGASVLALHDGIVEQVDSNRIVIRTLEQKVDGSPSVDIYNLLKFQKSNHNTCINQKPLVKVGHYVKKNDIIADGPSTDNGEIALGRNVLVAFLPWNGYNFEDSILISERIVKEDVFTSIHIEEFEVIARDTRLGPEEITRDIPNVSEEALRHLDEVGIIYIGAEVKAGDILVGKVTPKSESPITPEEKLLRAIFGEKAFDVKDSSLHVPSGVSGTVVEVRVFSRRGVEKDQRAIAIEKQQIEKLAKDRDDELEIIEHFVFSWLEKLLVGQVIINGPKQVKVGQTITTEMLKGLSKGQFWQITVEDANVMNEIEQIKTHYDEKKEALDKRFATKVEKLQSGDDLPQGALKVVKVFIATKHKLQPGDKMAGRHGNKGVISRIVPEEDMPFLEDGTVVDIVLNPLGLPSRMNIGQILETHLGWASINLAKKISTLVKEYKNKHIGIEQIKKFLIELYGENINSILERPEEEIISFCKKVSKGVHFATPVFDGAKVQDVKDMLKLAGQDPSGQVKLIDGRTGEYFDRLVTVGQKYLLKLHHLVDNKIHSRSIGPYSLVTQQPLGGKSHFGGQRFGEMECWALQAYGAAYTLQEMLTVKSDDVNGRIKTYDSIVRGENNFESGIPESFNVMIKEFRSLCLNVKLEVTSS</sequence>
<accession>Q9RH43</accession>
<keyword id="KW-0240">DNA-directed RNA polymerase</keyword>
<keyword id="KW-0548">Nucleotidyltransferase</keyword>
<keyword id="KW-0804">Transcription</keyword>
<keyword id="KW-0808">Transferase</keyword>
<feature type="chain" id="PRO_0000047949" description="DNA-directed RNA polymerase subunit beta">
    <location>
        <begin position="1"/>
        <end position="1373"/>
    </location>
</feature>
<gene>
    <name evidence="1" type="primary">rpoB</name>
</gene>
<dbReference type="EC" id="2.7.7.6" evidence="1"/>
<dbReference type="EMBL" id="AF076433">
    <property type="protein sequence ID" value="AAF22431.1"/>
    <property type="molecule type" value="Genomic_DNA"/>
</dbReference>
<dbReference type="SMR" id="Q9RH43"/>
<dbReference type="GO" id="GO:0000428">
    <property type="term" value="C:DNA-directed RNA polymerase complex"/>
    <property type="evidence" value="ECO:0007669"/>
    <property type="project" value="UniProtKB-KW"/>
</dbReference>
<dbReference type="GO" id="GO:0003677">
    <property type="term" value="F:DNA binding"/>
    <property type="evidence" value="ECO:0007669"/>
    <property type="project" value="UniProtKB-UniRule"/>
</dbReference>
<dbReference type="GO" id="GO:0003899">
    <property type="term" value="F:DNA-directed RNA polymerase activity"/>
    <property type="evidence" value="ECO:0007669"/>
    <property type="project" value="UniProtKB-UniRule"/>
</dbReference>
<dbReference type="GO" id="GO:0032549">
    <property type="term" value="F:ribonucleoside binding"/>
    <property type="evidence" value="ECO:0007669"/>
    <property type="project" value="InterPro"/>
</dbReference>
<dbReference type="GO" id="GO:0006351">
    <property type="term" value="P:DNA-templated transcription"/>
    <property type="evidence" value="ECO:0007669"/>
    <property type="project" value="UniProtKB-UniRule"/>
</dbReference>
<dbReference type="CDD" id="cd00653">
    <property type="entry name" value="RNA_pol_B_RPB2"/>
    <property type="match status" value="1"/>
</dbReference>
<dbReference type="Gene3D" id="2.40.50.100">
    <property type="match status" value="1"/>
</dbReference>
<dbReference type="Gene3D" id="2.40.50.150">
    <property type="match status" value="1"/>
</dbReference>
<dbReference type="Gene3D" id="3.90.1100.10">
    <property type="match status" value="2"/>
</dbReference>
<dbReference type="Gene3D" id="2.30.150.10">
    <property type="entry name" value="DNA-directed RNA polymerase, beta subunit, external 1 domain"/>
    <property type="match status" value="1"/>
</dbReference>
<dbReference type="Gene3D" id="2.40.270.10">
    <property type="entry name" value="DNA-directed RNA polymerase, subunit 2, domain 6"/>
    <property type="match status" value="1"/>
</dbReference>
<dbReference type="Gene3D" id="3.90.1800.10">
    <property type="entry name" value="RNA polymerase alpha subunit dimerisation domain"/>
    <property type="match status" value="1"/>
</dbReference>
<dbReference type="HAMAP" id="MF_01321">
    <property type="entry name" value="RNApol_bact_RpoB"/>
    <property type="match status" value="1"/>
</dbReference>
<dbReference type="InterPro" id="IPR042107">
    <property type="entry name" value="DNA-dir_RNA_pol_bsu_ext_1_sf"/>
</dbReference>
<dbReference type="InterPro" id="IPR019462">
    <property type="entry name" value="DNA-dir_RNA_pol_bsu_external_1"/>
</dbReference>
<dbReference type="InterPro" id="IPR015712">
    <property type="entry name" value="DNA-dir_RNA_pol_su2"/>
</dbReference>
<dbReference type="InterPro" id="IPR007120">
    <property type="entry name" value="DNA-dir_RNAP_su2_dom"/>
</dbReference>
<dbReference type="InterPro" id="IPR037033">
    <property type="entry name" value="DNA-dir_RNAP_su2_hyb_sf"/>
</dbReference>
<dbReference type="InterPro" id="IPR010243">
    <property type="entry name" value="RNA_pol_bsu_bac"/>
</dbReference>
<dbReference type="InterPro" id="IPR007121">
    <property type="entry name" value="RNA_pol_bsu_CS"/>
</dbReference>
<dbReference type="InterPro" id="IPR007644">
    <property type="entry name" value="RNA_pol_bsu_protrusion"/>
</dbReference>
<dbReference type="InterPro" id="IPR007642">
    <property type="entry name" value="RNA_pol_Rpb2_2"/>
</dbReference>
<dbReference type="InterPro" id="IPR007645">
    <property type="entry name" value="RNA_pol_Rpb2_3"/>
</dbReference>
<dbReference type="InterPro" id="IPR007641">
    <property type="entry name" value="RNA_pol_Rpb2_7"/>
</dbReference>
<dbReference type="InterPro" id="IPR014724">
    <property type="entry name" value="RNA_pol_RPB2_OB-fold"/>
</dbReference>
<dbReference type="NCBIfam" id="NF001616">
    <property type="entry name" value="PRK00405.1"/>
    <property type="match status" value="1"/>
</dbReference>
<dbReference type="NCBIfam" id="TIGR02013">
    <property type="entry name" value="rpoB"/>
    <property type="match status" value="1"/>
</dbReference>
<dbReference type="PANTHER" id="PTHR20856">
    <property type="entry name" value="DNA-DIRECTED RNA POLYMERASE I SUBUNIT 2"/>
    <property type="match status" value="1"/>
</dbReference>
<dbReference type="Pfam" id="PF04563">
    <property type="entry name" value="RNA_pol_Rpb2_1"/>
    <property type="match status" value="1"/>
</dbReference>
<dbReference type="Pfam" id="PF04561">
    <property type="entry name" value="RNA_pol_Rpb2_2"/>
    <property type="match status" value="2"/>
</dbReference>
<dbReference type="Pfam" id="PF04565">
    <property type="entry name" value="RNA_pol_Rpb2_3"/>
    <property type="match status" value="1"/>
</dbReference>
<dbReference type="Pfam" id="PF10385">
    <property type="entry name" value="RNA_pol_Rpb2_45"/>
    <property type="match status" value="1"/>
</dbReference>
<dbReference type="Pfam" id="PF00562">
    <property type="entry name" value="RNA_pol_Rpb2_6"/>
    <property type="match status" value="1"/>
</dbReference>
<dbReference type="Pfam" id="PF04560">
    <property type="entry name" value="RNA_pol_Rpb2_7"/>
    <property type="match status" value="1"/>
</dbReference>
<dbReference type="SUPFAM" id="SSF64484">
    <property type="entry name" value="beta and beta-prime subunits of DNA dependent RNA-polymerase"/>
    <property type="match status" value="1"/>
</dbReference>
<dbReference type="PROSITE" id="PS01166">
    <property type="entry name" value="RNA_POL_BETA"/>
    <property type="match status" value="1"/>
</dbReference>
<organism>
    <name type="scientific">Rickettsia massiliae</name>
    <dbReference type="NCBI Taxonomy" id="35791"/>
    <lineage>
        <taxon>Bacteria</taxon>
        <taxon>Pseudomonadati</taxon>
        <taxon>Pseudomonadota</taxon>
        <taxon>Alphaproteobacteria</taxon>
        <taxon>Rickettsiales</taxon>
        <taxon>Rickettsiaceae</taxon>
        <taxon>Rickettsieae</taxon>
        <taxon>Rickettsia</taxon>
        <taxon>spotted fever group</taxon>
    </lineage>
</organism>
<comment type="function">
    <text evidence="1">DNA-dependent RNA polymerase catalyzes the transcription of DNA into RNA using the four ribonucleoside triphosphates as substrates.</text>
</comment>
<comment type="catalytic activity">
    <reaction evidence="1">
        <text>RNA(n) + a ribonucleoside 5'-triphosphate = RNA(n+1) + diphosphate</text>
        <dbReference type="Rhea" id="RHEA:21248"/>
        <dbReference type="Rhea" id="RHEA-COMP:14527"/>
        <dbReference type="Rhea" id="RHEA-COMP:17342"/>
        <dbReference type="ChEBI" id="CHEBI:33019"/>
        <dbReference type="ChEBI" id="CHEBI:61557"/>
        <dbReference type="ChEBI" id="CHEBI:140395"/>
        <dbReference type="EC" id="2.7.7.6"/>
    </reaction>
</comment>
<comment type="subunit">
    <text evidence="1">The RNAP catalytic core consists of 2 alpha, 1 beta, 1 beta' and 1 omega subunit. When a sigma factor is associated with the core the holoenzyme is formed, which can initiate transcription.</text>
</comment>
<comment type="similarity">
    <text evidence="1">Belongs to the RNA polymerase beta chain family.</text>
</comment>
<proteinExistence type="inferred from homology"/>
<evidence type="ECO:0000255" key="1">
    <source>
        <dbReference type="HAMAP-Rule" id="MF_01321"/>
    </source>
</evidence>
<name>RPOB_RICMA</name>
<reference key="1">
    <citation type="journal article" date="1999" name="Antimicrob. Agents Chemother.">
        <title>Characterization of mutations in the rpoB gene in naturally rifampin-resistant Rickettsia species.</title>
        <authorList>
            <person name="Drancourt M."/>
            <person name="Raoult D."/>
        </authorList>
    </citation>
    <scope>NUCLEOTIDE SEQUENCE [GENOMIC DNA]</scope>
    <source>
        <strain>Mtu1</strain>
    </source>
</reference>
<protein>
    <recommendedName>
        <fullName evidence="1">DNA-directed RNA polymerase subunit beta</fullName>
        <shortName evidence="1">RNAP subunit beta</shortName>
        <ecNumber evidence="1">2.7.7.6</ecNumber>
    </recommendedName>
    <alternativeName>
        <fullName evidence="1">RNA polymerase subunit beta</fullName>
    </alternativeName>
    <alternativeName>
        <fullName evidence="1">Transcriptase subunit beta</fullName>
    </alternativeName>
</protein>